<sequence>MHKIINHPLIKDKLTRMRKVSTVSTVFRTNLEELTQLMVYEATKDLELNEIEIETPVVKNAKGYKLKNKICLIPILRAGIGMVDGVKSLIPTATIGHIGLYRNEETLKPVEYFKKFPKNISESDVIILDPMLATGGSVVEAVNIIKKYNPKSIKFVCIVAAPEGLEYVQKIHPDVDVYIAALDDKLNENGYITPGLGDAGDRIFGTK</sequence>
<dbReference type="EC" id="2.4.2.9" evidence="1"/>
<dbReference type="EMBL" id="CP001184">
    <property type="protein sequence ID" value="ACI60045.1"/>
    <property type="molecule type" value="Genomic_DNA"/>
</dbReference>
<dbReference type="RefSeq" id="WP_004026150.1">
    <property type="nucleotide sequence ID" value="NC_011374.1"/>
</dbReference>
<dbReference type="SMR" id="B5ZAU8"/>
<dbReference type="STRING" id="565575.UUR10_0130"/>
<dbReference type="GeneID" id="93848615"/>
<dbReference type="KEGG" id="uue:UUR10_0130"/>
<dbReference type="eggNOG" id="COG0035">
    <property type="taxonomic scope" value="Bacteria"/>
</dbReference>
<dbReference type="HOGENOM" id="CLU_067096_2_2_14"/>
<dbReference type="OrthoDB" id="9781675at2"/>
<dbReference type="UniPathway" id="UPA00574">
    <property type="reaction ID" value="UER00636"/>
</dbReference>
<dbReference type="Proteomes" id="UP000002018">
    <property type="component" value="Chromosome"/>
</dbReference>
<dbReference type="GO" id="GO:0005525">
    <property type="term" value="F:GTP binding"/>
    <property type="evidence" value="ECO:0007669"/>
    <property type="project" value="UniProtKB-KW"/>
</dbReference>
<dbReference type="GO" id="GO:0000287">
    <property type="term" value="F:magnesium ion binding"/>
    <property type="evidence" value="ECO:0007669"/>
    <property type="project" value="UniProtKB-UniRule"/>
</dbReference>
<dbReference type="GO" id="GO:0004845">
    <property type="term" value="F:uracil phosphoribosyltransferase activity"/>
    <property type="evidence" value="ECO:0007669"/>
    <property type="project" value="UniProtKB-UniRule"/>
</dbReference>
<dbReference type="GO" id="GO:0044206">
    <property type="term" value="P:UMP salvage"/>
    <property type="evidence" value="ECO:0007669"/>
    <property type="project" value="UniProtKB-UniRule"/>
</dbReference>
<dbReference type="GO" id="GO:0006223">
    <property type="term" value="P:uracil salvage"/>
    <property type="evidence" value="ECO:0007669"/>
    <property type="project" value="InterPro"/>
</dbReference>
<dbReference type="CDD" id="cd06223">
    <property type="entry name" value="PRTases_typeI"/>
    <property type="match status" value="1"/>
</dbReference>
<dbReference type="FunFam" id="3.40.50.2020:FF:000003">
    <property type="entry name" value="Uracil phosphoribosyltransferase"/>
    <property type="match status" value="1"/>
</dbReference>
<dbReference type="Gene3D" id="3.40.50.2020">
    <property type="match status" value="1"/>
</dbReference>
<dbReference type="HAMAP" id="MF_01218_B">
    <property type="entry name" value="Upp_B"/>
    <property type="match status" value="1"/>
</dbReference>
<dbReference type="InterPro" id="IPR000836">
    <property type="entry name" value="PRibTrfase_dom"/>
</dbReference>
<dbReference type="InterPro" id="IPR029057">
    <property type="entry name" value="PRTase-like"/>
</dbReference>
<dbReference type="InterPro" id="IPR034332">
    <property type="entry name" value="Upp_B"/>
</dbReference>
<dbReference type="InterPro" id="IPR050054">
    <property type="entry name" value="UPRTase/APRTase"/>
</dbReference>
<dbReference type="InterPro" id="IPR005765">
    <property type="entry name" value="Ura_phspho_trans"/>
</dbReference>
<dbReference type="NCBIfam" id="NF001097">
    <property type="entry name" value="PRK00129.1"/>
    <property type="match status" value="1"/>
</dbReference>
<dbReference type="NCBIfam" id="TIGR01091">
    <property type="entry name" value="upp"/>
    <property type="match status" value="1"/>
</dbReference>
<dbReference type="PANTHER" id="PTHR32315">
    <property type="entry name" value="ADENINE PHOSPHORIBOSYLTRANSFERASE"/>
    <property type="match status" value="1"/>
</dbReference>
<dbReference type="PANTHER" id="PTHR32315:SF4">
    <property type="entry name" value="URACIL PHOSPHORIBOSYLTRANSFERASE, CHLOROPLASTIC"/>
    <property type="match status" value="1"/>
</dbReference>
<dbReference type="Pfam" id="PF14681">
    <property type="entry name" value="UPRTase"/>
    <property type="match status" value="1"/>
</dbReference>
<dbReference type="SUPFAM" id="SSF53271">
    <property type="entry name" value="PRTase-like"/>
    <property type="match status" value="1"/>
</dbReference>
<feature type="chain" id="PRO_1000139175" description="Uracil phosphoribosyltransferase">
    <location>
        <begin position="1"/>
        <end position="207"/>
    </location>
</feature>
<feature type="binding site" evidence="1">
    <location>
        <position position="77"/>
    </location>
    <ligand>
        <name>5-phospho-alpha-D-ribose 1-diphosphate</name>
        <dbReference type="ChEBI" id="CHEBI:58017"/>
    </ligand>
</feature>
<feature type="binding site" evidence="1">
    <location>
        <position position="102"/>
    </location>
    <ligand>
        <name>5-phospho-alpha-D-ribose 1-diphosphate</name>
        <dbReference type="ChEBI" id="CHEBI:58017"/>
    </ligand>
</feature>
<feature type="binding site" evidence="1">
    <location>
        <begin position="129"/>
        <end position="137"/>
    </location>
    <ligand>
        <name>5-phospho-alpha-D-ribose 1-diphosphate</name>
        <dbReference type="ChEBI" id="CHEBI:58017"/>
    </ligand>
</feature>
<feature type="binding site" evidence="1">
    <location>
        <position position="192"/>
    </location>
    <ligand>
        <name>uracil</name>
        <dbReference type="ChEBI" id="CHEBI:17568"/>
    </ligand>
</feature>
<feature type="binding site" evidence="1">
    <location>
        <begin position="197"/>
        <end position="199"/>
    </location>
    <ligand>
        <name>uracil</name>
        <dbReference type="ChEBI" id="CHEBI:17568"/>
    </ligand>
</feature>
<feature type="binding site" evidence="1">
    <location>
        <position position="198"/>
    </location>
    <ligand>
        <name>5-phospho-alpha-D-ribose 1-diphosphate</name>
        <dbReference type="ChEBI" id="CHEBI:58017"/>
    </ligand>
</feature>
<comment type="function">
    <text evidence="1">Catalyzes the conversion of uracil and 5-phospho-alpha-D-ribose 1-diphosphate (PRPP) to UMP and diphosphate.</text>
</comment>
<comment type="catalytic activity">
    <reaction evidence="1">
        <text>UMP + diphosphate = 5-phospho-alpha-D-ribose 1-diphosphate + uracil</text>
        <dbReference type="Rhea" id="RHEA:13017"/>
        <dbReference type="ChEBI" id="CHEBI:17568"/>
        <dbReference type="ChEBI" id="CHEBI:33019"/>
        <dbReference type="ChEBI" id="CHEBI:57865"/>
        <dbReference type="ChEBI" id="CHEBI:58017"/>
        <dbReference type="EC" id="2.4.2.9"/>
    </reaction>
</comment>
<comment type="cofactor">
    <cofactor evidence="1">
        <name>Mg(2+)</name>
        <dbReference type="ChEBI" id="CHEBI:18420"/>
    </cofactor>
    <text evidence="1">Binds 1 Mg(2+) ion per subunit. The magnesium is bound as Mg-PRPP.</text>
</comment>
<comment type="activity regulation">
    <text evidence="1">Allosterically activated by GTP.</text>
</comment>
<comment type="pathway">
    <text evidence="1">Pyrimidine metabolism; UMP biosynthesis via salvage pathway; UMP from uracil: step 1/1.</text>
</comment>
<comment type="similarity">
    <text evidence="1">Belongs to the UPRTase family.</text>
</comment>
<accession>B5ZAU8</accession>
<reference key="1">
    <citation type="submission" date="2008-10" db="EMBL/GenBank/DDBJ databases">
        <title>Genome sequence of Ureaplasma urealyticum serovar 10 ATCC-33699.</title>
        <authorList>
            <person name="Shrivastava S."/>
            <person name="Methe B.A."/>
            <person name="Glass J."/>
            <person name="White K."/>
            <person name="Duffy L.B."/>
        </authorList>
    </citation>
    <scope>NUCLEOTIDE SEQUENCE [LARGE SCALE GENOMIC DNA]</scope>
    <source>
        <strain>ATCC 33699 / Western</strain>
    </source>
</reference>
<name>UPP_UREU1</name>
<protein>
    <recommendedName>
        <fullName evidence="1">Uracil phosphoribosyltransferase</fullName>
        <ecNumber evidence="1">2.4.2.9</ecNumber>
    </recommendedName>
    <alternativeName>
        <fullName evidence="1">UMP pyrophosphorylase</fullName>
    </alternativeName>
    <alternativeName>
        <fullName evidence="1">UPRTase</fullName>
    </alternativeName>
</protein>
<proteinExistence type="inferred from homology"/>
<evidence type="ECO:0000255" key="1">
    <source>
        <dbReference type="HAMAP-Rule" id="MF_01218"/>
    </source>
</evidence>
<organism>
    <name type="scientific">Ureaplasma urealyticum serovar 10 (strain ATCC 33699 / Western)</name>
    <dbReference type="NCBI Taxonomy" id="565575"/>
    <lineage>
        <taxon>Bacteria</taxon>
        <taxon>Bacillati</taxon>
        <taxon>Mycoplasmatota</taxon>
        <taxon>Mycoplasmoidales</taxon>
        <taxon>Mycoplasmoidaceae</taxon>
        <taxon>Ureaplasma</taxon>
    </lineage>
</organism>
<keyword id="KW-0021">Allosteric enzyme</keyword>
<keyword id="KW-0328">Glycosyltransferase</keyword>
<keyword id="KW-0342">GTP-binding</keyword>
<keyword id="KW-0460">Magnesium</keyword>
<keyword id="KW-0547">Nucleotide-binding</keyword>
<keyword id="KW-0808">Transferase</keyword>
<gene>
    <name evidence="1" type="primary">upp</name>
    <name type="ordered locus">UUR10_0130</name>
</gene>